<comment type="function">
    <text evidence="1">Catalyzes the attachment of proline to tRNA(Pro) in a two-step reaction: proline is first activated by ATP to form Pro-AMP and then transferred to the acceptor end of tRNA(Pro).</text>
</comment>
<comment type="catalytic activity">
    <reaction evidence="1">
        <text>tRNA(Pro) + L-proline + ATP = L-prolyl-tRNA(Pro) + AMP + diphosphate</text>
        <dbReference type="Rhea" id="RHEA:14305"/>
        <dbReference type="Rhea" id="RHEA-COMP:9700"/>
        <dbReference type="Rhea" id="RHEA-COMP:9702"/>
        <dbReference type="ChEBI" id="CHEBI:30616"/>
        <dbReference type="ChEBI" id="CHEBI:33019"/>
        <dbReference type="ChEBI" id="CHEBI:60039"/>
        <dbReference type="ChEBI" id="CHEBI:78442"/>
        <dbReference type="ChEBI" id="CHEBI:78532"/>
        <dbReference type="ChEBI" id="CHEBI:456215"/>
        <dbReference type="EC" id="6.1.1.15"/>
    </reaction>
</comment>
<comment type="subunit">
    <text evidence="1">Homodimer.</text>
</comment>
<comment type="subcellular location">
    <subcellularLocation>
        <location evidence="1">Cytoplasm</location>
    </subcellularLocation>
</comment>
<comment type="domain">
    <text evidence="1">Consists of three domains: the N-terminal catalytic domain, the anticodon-binding domain and the C-terminal extension.</text>
</comment>
<comment type="similarity">
    <text evidence="1">Belongs to the class-II aminoacyl-tRNA synthetase family. ProS type 3 subfamily.</text>
</comment>
<evidence type="ECO:0000255" key="1">
    <source>
        <dbReference type="HAMAP-Rule" id="MF_01571"/>
    </source>
</evidence>
<keyword id="KW-0030">Aminoacyl-tRNA synthetase</keyword>
<keyword id="KW-0067">ATP-binding</keyword>
<keyword id="KW-0963">Cytoplasm</keyword>
<keyword id="KW-0436">Ligase</keyword>
<keyword id="KW-0547">Nucleotide-binding</keyword>
<keyword id="KW-0648">Protein biosynthesis</keyword>
<dbReference type="EC" id="6.1.1.15" evidence="1"/>
<dbReference type="EMBL" id="CP000962">
    <property type="protein sequence ID" value="ACA54689.1"/>
    <property type="molecule type" value="Genomic_DNA"/>
</dbReference>
<dbReference type="RefSeq" id="WP_012342762.1">
    <property type="nucleotide sequence ID" value="NC_010520.1"/>
</dbReference>
<dbReference type="SMR" id="B1L224"/>
<dbReference type="KEGG" id="cbl:CLK_2761"/>
<dbReference type="HOGENOM" id="CLU_001882_4_2_9"/>
<dbReference type="GO" id="GO:0017101">
    <property type="term" value="C:aminoacyl-tRNA synthetase multienzyme complex"/>
    <property type="evidence" value="ECO:0007669"/>
    <property type="project" value="TreeGrafter"/>
</dbReference>
<dbReference type="GO" id="GO:0005737">
    <property type="term" value="C:cytoplasm"/>
    <property type="evidence" value="ECO:0007669"/>
    <property type="project" value="UniProtKB-SubCell"/>
</dbReference>
<dbReference type="GO" id="GO:0005524">
    <property type="term" value="F:ATP binding"/>
    <property type="evidence" value="ECO:0007669"/>
    <property type="project" value="UniProtKB-UniRule"/>
</dbReference>
<dbReference type="GO" id="GO:0140096">
    <property type="term" value="F:catalytic activity, acting on a protein"/>
    <property type="evidence" value="ECO:0007669"/>
    <property type="project" value="UniProtKB-ARBA"/>
</dbReference>
<dbReference type="GO" id="GO:0004827">
    <property type="term" value="F:proline-tRNA ligase activity"/>
    <property type="evidence" value="ECO:0007669"/>
    <property type="project" value="UniProtKB-UniRule"/>
</dbReference>
<dbReference type="GO" id="GO:0016740">
    <property type="term" value="F:transferase activity"/>
    <property type="evidence" value="ECO:0007669"/>
    <property type="project" value="UniProtKB-ARBA"/>
</dbReference>
<dbReference type="GO" id="GO:0006433">
    <property type="term" value="P:prolyl-tRNA aminoacylation"/>
    <property type="evidence" value="ECO:0007669"/>
    <property type="project" value="UniProtKB-UniRule"/>
</dbReference>
<dbReference type="CDD" id="cd00862">
    <property type="entry name" value="ProRS_anticodon_zinc"/>
    <property type="match status" value="1"/>
</dbReference>
<dbReference type="CDD" id="cd00778">
    <property type="entry name" value="ProRS_core_arch_euk"/>
    <property type="match status" value="1"/>
</dbReference>
<dbReference type="FunFam" id="3.40.50.800:FF:000005">
    <property type="entry name" value="bifunctional glutamate/proline--tRNA ligase"/>
    <property type="match status" value="1"/>
</dbReference>
<dbReference type="FunFam" id="3.30.110.30:FF:000005">
    <property type="entry name" value="Proline--tRNA ligase"/>
    <property type="match status" value="1"/>
</dbReference>
<dbReference type="FunFam" id="3.30.930.10:FF:000023">
    <property type="entry name" value="Proline--tRNA ligase"/>
    <property type="match status" value="1"/>
</dbReference>
<dbReference type="Gene3D" id="3.40.50.800">
    <property type="entry name" value="Anticodon-binding domain"/>
    <property type="match status" value="1"/>
</dbReference>
<dbReference type="Gene3D" id="3.30.930.10">
    <property type="entry name" value="Bira Bifunctional Protein, Domain 2"/>
    <property type="match status" value="1"/>
</dbReference>
<dbReference type="Gene3D" id="3.30.110.30">
    <property type="entry name" value="C-terminal domain of ProRS"/>
    <property type="match status" value="1"/>
</dbReference>
<dbReference type="HAMAP" id="MF_01571">
    <property type="entry name" value="Pro_tRNA_synth_type3"/>
    <property type="match status" value="1"/>
</dbReference>
<dbReference type="InterPro" id="IPR002314">
    <property type="entry name" value="aa-tRNA-synt_IIb"/>
</dbReference>
<dbReference type="InterPro" id="IPR006195">
    <property type="entry name" value="aa-tRNA-synth_II"/>
</dbReference>
<dbReference type="InterPro" id="IPR045864">
    <property type="entry name" value="aa-tRNA-synth_II/BPL/LPL"/>
</dbReference>
<dbReference type="InterPro" id="IPR004154">
    <property type="entry name" value="Anticodon-bd"/>
</dbReference>
<dbReference type="InterPro" id="IPR036621">
    <property type="entry name" value="Anticodon-bd_dom_sf"/>
</dbReference>
<dbReference type="InterPro" id="IPR002316">
    <property type="entry name" value="Pro-tRNA-ligase_IIa"/>
</dbReference>
<dbReference type="InterPro" id="IPR004499">
    <property type="entry name" value="Pro-tRNA-ligase_IIa_arc-type"/>
</dbReference>
<dbReference type="InterPro" id="IPR016061">
    <property type="entry name" value="Pro-tRNA_ligase_II_C"/>
</dbReference>
<dbReference type="InterPro" id="IPR017449">
    <property type="entry name" value="Pro-tRNA_synth_II"/>
</dbReference>
<dbReference type="InterPro" id="IPR033721">
    <property type="entry name" value="ProRS_core_arch_euk"/>
</dbReference>
<dbReference type="NCBIfam" id="TIGR00408">
    <property type="entry name" value="proS_fam_I"/>
    <property type="match status" value="1"/>
</dbReference>
<dbReference type="PANTHER" id="PTHR43382:SF2">
    <property type="entry name" value="BIFUNCTIONAL GLUTAMATE_PROLINE--TRNA LIGASE"/>
    <property type="match status" value="1"/>
</dbReference>
<dbReference type="PANTHER" id="PTHR43382">
    <property type="entry name" value="PROLYL-TRNA SYNTHETASE"/>
    <property type="match status" value="1"/>
</dbReference>
<dbReference type="Pfam" id="PF03129">
    <property type="entry name" value="HGTP_anticodon"/>
    <property type="match status" value="1"/>
</dbReference>
<dbReference type="Pfam" id="PF09180">
    <property type="entry name" value="ProRS-C_1"/>
    <property type="match status" value="1"/>
</dbReference>
<dbReference type="Pfam" id="PF00587">
    <property type="entry name" value="tRNA-synt_2b"/>
    <property type="match status" value="1"/>
</dbReference>
<dbReference type="PRINTS" id="PR01046">
    <property type="entry name" value="TRNASYNTHPRO"/>
</dbReference>
<dbReference type="SMART" id="SM00946">
    <property type="entry name" value="ProRS-C_1"/>
    <property type="match status" value="1"/>
</dbReference>
<dbReference type="SUPFAM" id="SSF64586">
    <property type="entry name" value="C-terminal domain of ProRS"/>
    <property type="match status" value="1"/>
</dbReference>
<dbReference type="SUPFAM" id="SSF52954">
    <property type="entry name" value="Class II aaRS ABD-related"/>
    <property type="match status" value="1"/>
</dbReference>
<dbReference type="SUPFAM" id="SSF55681">
    <property type="entry name" value="Class II aaRS and biotin synthetases"/>
    <property type="match status" value="1"/>
</dbReference>
<dbReference type="PROSITE" id="PS50862">
    <property type="entry name" value="AA_TRNA_LIGASE_II"/>
    <property type="match status" value="1"/>
</dbReference>
<accession>B1L224</accession>
<name>SYP_CLOBM</name>
<feature type="chain" id="PRO_1000215558" description="Proline--tRNA ligase">
    <location>
        <begin position="1"/>
        <end position="478"/>
    </location>
</feature>
<gene>
    <name evidence="1" type="primary">proS</name>
    <name type="ordered locus">CLK_2761</name>
</gene>
<organism>
    <name type="scientific">Clostridium botulinum (strain Loch Maree / Type A3)</name>
    <dbReference type="NCBI Taxonomy" id="498214"/>
    <lineage>
        <taxon>Bacteria</taxon>
        <taxon>Bacillati</taxon>
        <taxon>Bacillota</taxon>
        <taxon>Clostridia</taxon>
        <taxon>Eubacteriales</taxon>
        <taxon>Clostridiaceae</taxon>
        <taxon>Clostridium</taxon>
    </lineage>
</organism>
<reference key="1">
    <citation type="journal article" date="2007" name="PLoS ONE">
        <title>Analysis of the neurotoxin complex genes in Clostridium botulinum A1-A4 and B1 strains: BoNT/A3, /Ba4 and /B1 clusters are located within plasmids.</title>
        <authorList>
            <person name="Smith T.J."/>
            <person name="Hill K.K."/>
            <person name="Foley B.T."/>
            <person name="Detter J.C."/>
            <person name="Munk A.C."/>
            <person name="Bruce D.C."/>
            <person name="Doggett N.A."/>
            <person name="Smith L.A."/>
            <person name="Marks J.D."/>
            <person name="Xie G."/>
            <person name="Brettin T.S."/>
        </authorList>
    </citation>
    <scope>NUCLEOTIDE SEQUENCE [LARGE SCALE GENOMIC DNA]</scope>
    <source>
        <strain>Loch Maree / Type A3</strain>
    </source>
</reference>
<protein>
    <recommendedName>
        <fullName evidence="1">Proline--tRNA ligase</fullName>
        <ecNumber evidence="1">6.1.1.15</ecNumber>
    </recommendedName>
    <alternativeName>
        <fullName evidence="1">Prolyl-tRNA synthetase</fullName>
        <shortName evidence="1">ProRS</shortName>
    </alternativeName>
</protein>
<proteinExistence type="inferred from homology"/>
<sequence>MAKDKKFVEDITPMDEDFAQWYTDIVKKAELADYSSIKGCMIIRPNGYAIWENIQKYVDTKLKEYGHENVSMPIFIPENLLQKEKDHVEGFAPEVAWVTHGGDDELAERLCVRPTSETLFCEHYAKIVQSYKDLPKLYNQWCSVVRWEKTTRPFLRTTEFLWQEGHTIHETKEEAESHSLKILNMYSRLCEDMLAMPVVMGKKTEKEKFAGADDTYTIESLMHDGKALQAGTSHYLGQNFSKAFAIQFSDRNGKLEYPHYTTWAVTTRLIGAIIMVHGDDSGLKLPPRIAPTQAVIIPVAQHKEGVLEKAKELKEKLAKVVRVKLDDSDKMPGWKYSEYEMKGIPLRIEIGPKDIEKNQAVLVRRDNREKTIVSLDEIEIKVQEMLDTIHNSMLEEARKARDEKTYVATTMEEFEDIIENKPGFIKAMWCGDRACEDKIREVTGATSRCMPFEQEVVSDTCVCCGKKAKNLIYWGRAY</sequence>